<gene>
    <name evidence="1" type="primary">groEL</name>
    <name evidence="1" type="synonym">groL</name>
</gene>
<protein>
    <recommendedName>
        <fullName evidence="1">Chaperonin GroEL</fullName>
        <ecNumber evidence="1">5.6.1.7</ecNumber>
    </recommendedName>
    <alternativeName>
        <fullName evidence="1">60 kDa chaperonin</fullName>
    </alternativeName>
    <alternativeName>
        <fullName evidence="1">Chaperonin-60</fullName>
        <shortName evidence="1">Cpn60</shortName>
    </alternativeName>
</protein>
<name>CH60_CLOBO</name>
<feature type="chain" id="PRO_0000063339" description="Chaperonin GroEL">
    <location>
        <begin position="1"/>
        <end position="543"/>
    </location>
</feature>
<feature type="binding site" evidence="1">
    <location>
        <begin position="29"/>
        <end position="32"/>
    </location>
    <ligand>
        <name>ATP</name>
        <dbReference type="ChEBI" id="CHEBI:30616"/>
    </ligand>
</feature>
<feature type="binding site" evidence="1">
    <location>
        <begin position="86"/>
        <end position="90"/>
    </location>
    <ligand>
        <name>ATP</name>
        <dbReference type="ChEBI" id="CHEBI:30616"/>
    </ligand>
</feature>
<feature type="binding site" evidence="1">
    <location>
        <position position="413"/>
    </location>
    <ligand>
        <name>ATP</name>
        <dbReference type="ChEBI" id="CHEBI:30616"/>
    </ligand>
</feature>
<feature type="binding site" evidence="1">
    <location>
        <begin position="477"/>
        <end position="479"/>
    </location>
    <ligand>
        <name>ATP</name>
        <dbReference type="ChEBI" id="CHEBI:30616"/>
    </ligand>
</feature>
<feature type="binding site" evidence="1">
    <location>
        <position position="493"/>
    </location>
    <ligand>
        <name>ATP</name>
        <dbReference type="ChEBI" id="CHEBI:30616"/>
    </ligand>
</feature>
<organism>
    <name type="scientific">Clostridium botulinum</name>
    <dbReference type="NCBI Taxonomy" id="1491"/>
    <lineage>
        <taxon>Bacteria</taxon>
        <taxon>Bacillati</taxon>
        <taxon>Bacillota</taxon>
        <taxon>Clostridia</taxon>
        <taxon>Eubacteriales</taxon>
        <taxon>Clostridiaceae</taxon>
        <taxon>Clostridium</taxon>
    </lineage>
</organism>
<dbReference type="EC" id="5.6.1.7" evidence="1"/>
<dbReference type="EMBL" id="AB086955">
    <property type="protein sequence ID" value="BAC06587.1"/>
    <property type="molecule type" value="Genomic_DNA"/>
</dbReference>
<dbReference type="RefSeq" id="WP_039257182.1">
    <property type="nucleotide sequence ID" value="NZ_LHYY01000030.1"/>
</dbReference>
<dbReference type="SMR" id="Q8KJ24"/>
<dbReference type="STRING" id="929506.CbC4_2209"/>
<dbReference type="PATRIC" id="fig|1491.434.peg.1337"/>
<dbReference type="eggNOG" id="COG0459">
    <property type="taxonomic scope" value="Bacteria"/>
</dbReference>
<dbReference type="GO" id="GO:0005737">
    <property type="term" value="C:cytoplasm"/>
    <property type="evidence" value="ECO:0007669"/>
    <property type="project" value="UniProtKB-SubCell"/>
</dbReference>
<dbReference type="GO" id="GO:0005524">
    <property type="term" value="F:ATP binding"/>
    <property type="evidence" value="ECO:0007669"/>
    <property type="project" value="UniProtKB-UniRule"/>
</dbReference>
<dbReference type="GO" id="GO:0140662">
    <property type="term" value="F:ATP-dependent protein folding chaperone"/>
    <property type="evidence" value="ECO:0007669"/>
    <property type="project" value="InterPro"/>
</dbReference>
<dbReference type="GO" id="GO:0016853">
    <property type="term" value="F:isomerase activity"/>
    <property type="evidence" value="ECO:0007669"/>
    <property type="project" value="UniProtKB-KW"/>
</dbReference>
<dbReference type="GO" id="GO:0051082">
    <property type="term" value="F:unfolded protein binding"/>
    <property type="evidence" value="ECO:0007669"/>
    <property type="project" value="UniProtKB-UniRule"/>
</dbReference>
<dbReference type="GO" id="GO:0042026">
    <property type="term" value="P:protein refolding"/>
    <property type="evidence" value="ECO:0007669"/>
    <property type="project" value="UniProtKB-UniRule"/>
</dbReference>
<dbReference type="CDD" id="cd03344">
    <property type="entry name" value="GroEL"/>
    <property type="match status" value="1"/>
</dbReference>
<dbReference type="FunFam" id="3.50.7.10:FF:000001">
    <property type="entry name" value="60 kDa chaperonin"/>
    <property type="match status" value="1"/>
</dbReference>
<dbReference type="Gene3D" id="3.50.7.10">
    <property type="entry name" value="GroEL"/>
    <property type="match status" value="1"/>
</dbReference>
<dbReference type="Gene3D" id="1.10.560.10">
    <property type="entry name" value="GroEL-like equatorial domain"/>
    <property type="match status" value="1"/>
</dbReference>
<dbReference type="Gene3D" id="3.30.260.10">
    <property type="entry name" value="TCP-1-like chaperonin intermediate domain"/>
    <property type="match status" value="1"/>
</dbReference>
<dbReference type="HAMAP" id="MF_00600">
    <property type="entry name" value="CH60"/>
    <property type="match status" value="1"/>
</dbReference>
<dbReference type="InterPro" id="IPR018370">
    <property type="entry name" value="Chaperonin_Cpn60_CS"/>
</dbReference>
<dbReference type="InterPro" id="IPR001844">
    <property type="entry name" value="Cpn60/GroEL"/>
</dbReference>
<dbReference type="InterPro" id="IPR002423">
    <property type="entry name" value="Cpn60/GroEL/TCP-1"/>
</dbReference>
<dbReference type="InterPro" id="IPR027409">
    <property type="entry name" value="GroEL-like_apical_dom_sf"/>
</dbReference>
<dbReference type="InterPro" id="IPR027413">
    <property type="entry name" value="GROEL-like_equatorial_sf"/>
</dbReference>
<dbReference type="InterPro" id="IPR027410">
    <property type="entry name" value="TCP-1-like_intermed_sf"/>
</dbReference>
<dbReference type="NCBIfam" id="TIGR02348">
    <property type="entry name" value="GroEL"/>
    <property type="match status" value="1"/>
</dbReference>
<dbReference type="NCBIfam" id="NF000592">
    <property type="entry name" value="PRK00013.1"/>
    <property type="match status" value="1"/>
</dbReference>
<dbReference type="NCBIfam" id="NF009487">
    <property type="entry name" value="PRK12849.1"/>
    <property type="match status" value="1"/>
</dbReference>
<dbReference type="NCBIfam" id="NF009488">
    <property type="entry name" value="PRK12850.1"/>
    <property type="match status" value="1"/>
</dbReference>
<dbReference type="NCBIfam" id="NF009489">
    <property type="entry name" value="PRK12851.1"/>
    <property type="match status" value="1"/>
</dbReference>
<dbReference type="PANTHER" id="PTHR45633">
    <property type="entry name" value="60 KDA HEAT SHOCK PROTEIN, MITOCHONDRIAL"/>
    <property type="match status" value="1"/>
</dbReference>
<dbReference type="Pfam" id="PF00118">
    <property type="entry name" value="Cpn60_TCP1"/>
    <property type="match status" value="1"/>
</dbReference>
<dbReference type="PRINTS" id="PR00298">
    <property type="entry name" value="CHAPERONIN60"/>
</dbReference>
<dbReference type="SUPFAM" id="SSF52029">
    <property type="entry name" value="GroEL apical domain-like"/>
    <property type="match status" value="1"/>
</dbReference>
<dbReference type="SUPFAM" id="SSF48592">
    <property type="entry name" value="GroEL equatorial domain-like"/>
    <property type="match status" value="1"/>
</dbReference>
<dbReference type="SUPFAM" id="SSF54849">
    <property type="entry name" value="GroEL-intermediate domain like"/>
    <property type="match status" value="1"/>
</dbReference>
<dbReference type="PROSITE" id="PS00296">
    <property type="entry name" value="CHAPERONINS_CPN60"/>
    <property type="match status" value="1"/>
</dbReference>
<evidence type="ECO:0000255" key="1">
    <source>
        <dbReference type="HAMAP-Rule" id="MF_00600"/>
    </source>
</evidence>
<reference key="1">
    <citation type="submission" date="2002-06" db="EMBL/GenBank/DDBJ databases">
        <title>Clostridium botulinum GroEL and GroES homolog.</title>
        <authorList>
            <person name="Sagane Y."/>
            <person name="Hasegawa K."/>
            <person name="Mutoh S."/>
            <person name="Kouguchi H."/>
            <person name="Suzuki T."/>
            <person name="Sunagawa H."/>
            <person name="Watanabe T."/>
            <person name="Ohyama T."/>
        </authorList>
    </citation>
    <scope>NUCLEOTIDE SEQUENCE [GENOMIC DNA]</scope>
    <source>
        <strain>D-4947 / Type D</strain>
    </source>
</reference>
<accession>Q8KJ24</accession>
<sequence length="543" mass="58219">MAKSILFGEESRRAMQAGVDKLANAVKVTLGPKGRNVVLDKKFGSPLITNDGVTIAKEIELEDPYENMGAQLVKEVATKTNDVAGDGTTTATLLAQAIIREGLKNVTAGANPMLIRKGIKLAVDTAVEQIKKSSKQVDGKEDIARVAAISAADPEIGKLIADAMERVGNEGVITVEESNTMATELEVVEGMQFDRGYLSPYMVTDAEKMEAVLENPYILLTDKKISNIQEILPILEQIVQQGKKLLIIAEDIEGEALATLVVNKLRGTFTCVAVKAPGFGDRRKEMLRDIAILTGGEVISEELGREIKDVTLDMLGTAESIKVTKENTTIVNGKGSKAEIEDRIGQIKRQIEETTSEFDKEKLQERLAKIAGGVAVVKVGAATETELKERKLRIEDALAATKAAVEEGIVAGGGTAYLRAIKEVEKLTDNNSEIRLGIAIIRRALEEPVRQIASNAGLEGSVIIDKIMNGQEGMGFDALEGEYVNMVQKGIVDPAKVTRSALQNAASVASTFLTTECVVAEIPEKNPAPQAPGMGGMGMEGMY</sequence>
<proteinExistence type="inferred from homology"/>
<comment type="function">
    <text evidence="1">Together with its co-chaperonin GroES, plays an essential role in assisting protein folding. The GroEL-GroES system forms a nano-cage that allows encapsulation of the non-native substrate proteins and provides a physical environment optimized to promote and accelerate protein folding.</text>
</comment>
<comment type="catalytic activity">
    <reaction evidence="1">
        <text>ATP + H2O + a folded polypeptide = ADP + phosphate + an unfolded polypeptide.</text>
        <dbReference type="EC" id="5.6.1.7"/>
    </reaction>
</comment>
<comment type="subunit">
    <text evidence="1">Forms a cylinder of 14 subunits composed of two heptameric rings stacked back-to-back. Interacts with the co-chaperonin GroES.</text>
</comment>
<comment type="subcellular location">
    <subcellularLocation>
        <location evidence="1">Cytoplasm</location>
    </subcellularLocation>
</comment>
<comment type="similarity">
    <text evidence="1">Belongs to the chaperonin (HSP60) family.</text>
</comment>
<keyword id="KW-0067">ATP-binding</keyword>
<keyword id="KW-0143">Chaperone</keyword>
<keyword id="KW-0963">Cytoplasm</keyword>
<keyword id="KW-0413">Isomerase</keyword>
<keyword id="KW-0547">Nucleotide-binding</keyword>